<dbReference type="PIR" id="A02331">
    <property type="entry name" value="HAJSB"/>
</dbReference>
<dbReference type="SMR" id="P02004"/>
<dbReference type="GO" id="GO:0072562">
    <property type="term" value="C:blood microparticle"/>
    <property type="evidence" value="ECO:0007669"/>
    <property type="project" value="TreeGrafter"/>
</dbReference>
<dbReference type="GO" id="GO:0031838">
    <property type="term" value="C:haptoglobin-hemoglobin complex"/>
    <property type="evidence" value="ECO:0007669"/>
    <property type="project" value="TreeGrafter"/>
</dbReference>
<dbReference type="GO" id="GO:0005833">
    <property type="term" value="C:hemoglobin complex"/>
    <property type="evidence" value="ECO:0007669"/>
    <property type="project" value="InterPro"/>
</dbReference>
<dbReference type="GO" id="GO:0031720">
    <property type="term" value="F:haptoglobin binding"/>
    <property type="evidence" value="ECO:0007669"/>
    <property type="project" value="TreeGrafter"/>
</dbReference>
<dbReference type="GO" id="GO:0020037">
    <property type="term" value="F:heme binding"/>
    <property type="evidence" value="ECO:0007669"/>
    <property type="project" value="InterPro"/>
</dbReference>
<dbReference type="GO" id="GO:0005506">
    <property type="term" value="F:iron ion binding"/>
    <property type="evidence" value="ECO:0007669"/>
    <property type="project" value="InterPro"/>
</dbReference>
<dbReference type="GO" id="GO:0043177">
    <property type="term" value="F:organic acid binding"/>
    <property type="evidence" value="ECO:0007669"/>
    <property type="project" value="TreeGrafter"/>
</dbReference>
<dbReference type="GO" id="GO:0019825">
    <property type="term" value="F:oxygen binding"/>
    <property type="evidence" value="ECO:0007669"/>
    <property type="project" value="InterPro"/>
</dbReference>
<dbReference type="GO" id="GO:0005344">
    <property type="term" value="F:oxygen carrier activity"/>
    <property type="evidence" value="ECO:0007669"/>
    <property type="project" value="UniProtKB-KW"/>
</dbReference>
<dbReference type="GO" id="GO:0004601">
    <property type="term" value="F:peroxidase activity"/>
    <property type="evidence" value="ECO:0007669"/>
    <property type="project" value="TreeGrafter"/>
</dbReference>
<dbReference type="GO" id="GO:0042744">
    <property type="term" value="P:hydrogen peroxide catabolic process"/>
    <property type="evidence" value="ECO:0007669"/>
    <property type="project" value="TreeGrafter"/>
</dbReference>
<dbReference type="CDD" id="cd08927">
    <property type="entry name" value="Hb-alpha-like"/>
    <property type="match status" value="1"/>
</dbReference>
<dbReference type="FunFam" id="1.10.490.10:FF:000002">
    <property type="entry name" value="Hemoglobin subunit alpha"/>
    <property type="match status" value="1"/>
</dbReference>
<dbReference type="Gene3D" id="1.10.490.10">
    <property type="entry name" value="Globins"/>
    <property type="match status" value="1"/>
</dbReference>
<dbReference type="InterPro" id="IPR000971">
    <property type="entry name" value="Globin"/>
</dbReference>
<dbReference type="InterPro" id="IPR009050">
    <property type="entry name" value="Globin-like_sf"/>
</dbReference>
<dbReference type="InterPro" id="IPR012292">
    <property type="entry name" value="Globin/Proto"/>
</dbReference>
<dbReference type="InterPro" id="IPR002338">
    <property type="entry name" value="Hemoglobin_a-typ"/>
</dbReference>
<dbReference type="InterPro" id="IPR050056">
    <property type="entry name" value="Hemoglobin_oxygen_transport"/>
</dbReference>
<dbReference type="InterPro" id="IPR002339">
    <property type="entry name" value="Hemoglobin_pi"/>
</dbReference>
<dbReference type="PANTHER" id="PTHR11442">
    <property type="entry name" value="HEMOGLOBIN FAMILY MEMBER"/>
    <property type="match status" value="1"/>
</dbReference>
<dbReference type="PANTHER" id="PTHR11442:SF41">
    <property type="entry name" value="HEMOGLOBIN SUBUNIT ZETA"/>
    <property type="match status" value="1"/>
</dbReference>
<dbReference type="Pfam" id="PF00042">
    <property type="entry name" value="Globin"/>
    <property type="match status" value="1"/>
</dbReference>
<dbReference type="PRINTS" id="PR00612">
    <property type="entry name" value="ALPHAHAEM"/>
</dbReference>
<dbReference type="PRINTS" id="PR00815">
    <property type="entry name" value="PIHAEM"/>
</dbReference>
<dbReference type="SUPFAM" id="SSF46458">
    <property type="entry name" value="Globin-like"/>
    <property type="match status" value="1"/>
</dbReference>
<dbReference type="PROSITE" id="PS01033">
    <property type="entry name" value="GLOBIN"/>
    <property type="match status" value="1"/>
</dbReference>
<organism>
    <name type="scientific">Sturnus vulgaris</name>
    <name type="common">Starling</name>
    <dbReference type="NCBI Taxonomy" id="9172"/>
    <lineage>
        <taxon>Eukaryota</taxon>
        <taxon>Metazoa</taxon>
        <taxon>Chordata</taxon>
        <taxon>Craniata</taxon>
        <taxon>Vertebrata</taxon>
        <taxon>Euteleostomi</taxon>
        <taxon>Archelosauria</taxon>
        <taxon>Archosauria</taxon>
        <taxon>Dinosauria</taxon>
        <taxon>Saurischia</taxon>
        <taxon>Theropoda</taxon>
        <taxon>Coelurosauria</taxon>
        <taxon>Aves</taxon>
        <taxon>Neognathae</taxon>
        <taxon>Neoaves</taxon>
        <taxon>Telluraves</taxon>
        <taxon>Australaves</taxon>
        <taxon>Passeriformes</taxon>
        <taxon>Sturnidae</taxon>
        <taxon>Sturnus</taxon>
    </lineage>
</organism>
<feature type="chain" id="PRO_0000052841" description="Hemoglobin subunit alpha-D">
    <location>
        <begin position="1"/>
        <end position="141"/>
    </location>
</feature>
<feature type="domain" description="Globin" evidence="1">
    <location>
        <begin position="1"/>
        <end position="141"/>
    </location>
</feature>
<feature type="binding site" description="distal binding residue">
    <location>
        <position position="58"/>
    </location>
    <ligand>
        <name>heme b</name>
        <dbReference type="ChEBI" id="CHEBI:60344"/>
    </ligand>
    <ligandPart>
        <name>Fe</name>
        <dbReference type="ChEBI" id="CHEBI:18248"/>
    </ligandPart>
</feature>
<feature type="binding site" description="proximal binding residue">
    <location>
        <position position="87"/>
    </location>
    <ligand>
        <name>heme b</name>
        <dbReference type="ChEBI" id="CHEBI:60344"/>
    </ligand>
    <ligandPart>
        <name>Fe</name>
        <dbReference type="ChEBI" id="CHEBI:18248"/>
    </ligandPart>
</feature>
<name>HBAD_STUVU</name>
<protein>
    <recommendedName>
        <fullName>Hemoglobin subunit alpha-D</fullName>
    </recommendedName>
    <alternativeName>
        <fullName>Alpha-D-globin</fullName>
    </alternativeName>
    <alternativeName>
        <fullName>Hemoglobin alpha-D chain</fullName>
    </alternativeName>
</protein>
<reference key="1">
    <citation type="journal article" date="1984" name="Hoppe-Seyler's Z. Physiol. Chem.">
        <title>Hemoglobins of the common starling (Sturnus vulgaris, Passeriformes). The primary structures of the alphaA, alphaD and beta chains.</title>
        <authorList>
            <person name="Oberthur W."/>
            <person name="Braunitzer G."/>
        </authorList>
    </citation>
    <scope>PROTEIN SEQUENCE</scope>
</reference>
<gene>
    <name type="primary">HBAD</name>
</gene>
<keyword id="KW-0903">Direct protein sequencing</keyword>
<keyword id="KW-0349">Heme</keyword>
<keyword id="KW-0408">Iron</keyword>
<keyword id="KW-0479">Metal-binding</keyword>
<keyword id="KW-0561">Oxygen transport</keyword>
<keyword id="KW-0813">Transport</keyword>
<sequence length="141" mass="15660">VLTAEDKKLIQQTWGKLGGAEEEIGAEALWRMFHAYPPTKTYFPHFDLSQGSDQIRGHGKKVVAALGNAIKNLDNLSQALSELSNLHAYNLRVDPVNFKFLSQCLQVTLATRLGKEYSPEVHSAVDKFMSAVAAVLAEKYR</sequence>
<evidence type="ECO:0000255" key="1">
    <source>
        <dbReference type="PROSITE-ProRule" id="PRU00238"/>
    </source>
</evidence>
<proteinExistence type="evidence at protein level"/>
<accession>P02004</accession>
<comment type="function">
    <text>Involved in oxygen transport from the lung to the various peripheral tissues.</text>
</comment>
<comment type="subunit">
    <text>Heterotetramer of two alpha-D chains and two beta chains.</text>
</comment>
<comment type="tissue specificity">
    <text>Red blood cells.</text>
</comment>
<comment type="developmental stage">
    <text>In birds, the alpha-D chain occurs in a minor hemoglobin component, called hemoglobin d, which is expressed in late embryonic and adult life.</text>
</comment>
<comment type="similarity">
    <text evidence="1">Belongs to the globin family.</text>
</comment>